<reference key="1">
    <citation type="submission" date="2007-12" db="EMBL/GenBank/DDBJ databases">
        <title>Complete sequence of Methylobacterium extorquens PA1.</title>
        <authorList>
            <consortium name="US DOE Joint Genome Institute"/>
            <person name="Copeland A."/>
            <person name="Lucas S."/>
            <person name="Lapidus A."/>
            <person name="Barry K."/>
            <person name="Glavina del Rio T."/>
            <person name="Dalin E."/>
            <person name="Tice H."/>
            <person name="Pitluck S."/>
            <person name="Saunders E."/>
            <person name="Brettin T."/>
            <person name="Bruce D."/>
            <person name="Detter J.C."/>
            <person name="Han C."/>
            <person name="Schmutz J."/>
            <person name="Larimer F."/>
            <person name="Land M."/>
            <person name="Hauser L."/>
            <person name="Kyrpides N."/>
            <person name="Kim E."/>
            <person name="Marx C."/>
            <person name="Richardson P."/>
        </authorList>
    </citation>
    <scope>NUCLEOTIDE SEQUENCE [LARGE SCALE GENOMIC DNA]</scope>
    <source>
        <strain>PA1</strain>
    </source>
</reference>
<dbReference type="EMBL" id="CP000908">
    <property type="protein sequence ID" value="ABY30578.1"/>
    <property type="molecule type" value="Genomic_DNA"/>
</dbReference>
<dbReference type="RefSeq" id="WP_012253651.1">
    <property type="nucleotide sequence ID" value="NC_010172.1"/>
</dbReference>
<dbReference type="SMR" id="A9W4S2"/>
<dbReference type="GeneID" id="72989871"/>
<dbReference type="KEGG" id="mex:Mext_2183"/>
<dbReference type="eggNOG" id="COG1841">
    <property type="taxonomic scope" value="Bacteria"/>
</dbReference>
<dbReference type="HOGENOM" id="CLU_131047_1_2_5"/>
<dbReference type="BioCyc" id="MEXT419610:MEXT_RS11020-MONOMER"/>
<dbReference type="GO" id="GO:0022625">
    <property type="term" value="C:cytosolic large ribosomal subunit"/>
    <property type="evidence" value="ECO:0007669"/>
    <property type="project" value="TreeGrafter"/>
</dbReference>
<dbReference type="GO" id="GO:0003735">
    <property type="term" value="F:structural constituent of ribosome"/>
    <property type="evidence" value="ECO:0007669"/>
    <property type="project" value="InterPro"/>
</dbReference>
<dbReference type="GO" id="GO:0006412">
    <property type="term" value="P:translation"/>
    <property type="evidence" value="ECO:0007669"/>
    <property type="project" value="UniProtKB-UniRule"/>
</dbReference>
<dbReference type="CDD" id="cd01658">
    <property type="entry name" value="Ribosomal_L30"/>
    <property type="match status" value="1"/>
</dbReference>
<dbReference type="Gene3D" id="3.30.1390.20">
    <property type="entry name" value="Ribosomal protein L30, ferredoxin-like fold domain"/>
    <property type="match status" value="1"/>
</dbReference>
<dbReference type="HAMAP" id="MF_01371_B">
    <property type="entry name" value="Ribosomal_uL30_B"/>
    <property type="match status" value="1"/>
</dbReference>
<dbReference type="InterPro" id="IPR036919">
    <property type="entry name" value="Ribo_uL30_ferredoxin-like_sf"/>
</dbReference>
<dbReference type="InterPro" id="IPR005996">
    <property type="entry name" value="Ribosomal_uL30_bac-type"/>
</dbReference>
<dbReference type="InterPro" id="IPR016082">
    <property type="entry name" value="Ribosomal_uL30_ferredoxin-like"/>
</dbReference>
<dbReference type="NCBIfam" id="TIGR01308">
    <property type="entry name" value="rpmD_bact"/>
    <property type="match status" value="1"/>
</dbReference>
<dbReference type="PANTHER" id="PTHR15892:SF2">
    <property type="entry name" value="LARGE RIBOSOMAL SUBUNIT PROTEIN UL30M"/>
    <property type="match status" value="1"/>
</dbReference>
<dbReference type="PANTHER" id="PTHR15892">
    <property type="entry name" value="MITOCHONDRIAL RIBOSOMAL PROTEIN L30"/>
    <property type="match status" value="1"/>
</dbReference>
<dbReference type="Pfam" id="PF00327">
    <property type="entry name" value="Ribosomal_L30"/>
    <property type="match status" value="1"/>
</dbReference>
<dbReference type="PIRSF" id="PIRSF002211">
    <property type="entry name" value="Ribosomal_L30_bac-type"/>
    <property type="match status" value="1"/>
</dbReference>
<dbReference type="SUPFAM" id="SSF55129">
    <property type="entry name" value="Ribosomal protein L30p/L7e"/>
    <property type="match status" value="1"/>
</dbReference>
<organism>
    <name type="scientific">Methylorubrum extorquens (strain PA1)</name>
    <name type="common">Methylobacterium extorquens</name>
    <dbReference type="NCBI Taxonomy" id="419610"/>
    <lineage>
        <taxon>Bacteria</taxon>
        <taxon>Pseudomonadati</taxon>
        <taxon>Pseudomonadota</taxon>
        <taxon>Alphaproteobacteria</taxon>
        <taxon>Hyphomicrobiales</taxon>
        <taxon>Methylobacteriaceae</taxon>
        <taxon>Methylorubrum</taxon>
    </lineage>
</organism>
<name>RL30_METEP</name>
<sequence>MATKTVRIEQIGSPIRREASQRATLVGLKLNKLHRVSELEDTPSVRGMIRKVAHLVRVLDDAAA</sequence>
<feature type="chain" id="PRO_0000347116" description="Large ribosomal subunit protein uL30">
    <location>
        <begin position="1"/>
        <end position="64"/>
    </location>
</feature>
<comment type="subunit">
    <text evidence="1">Part of the 50S ribosomal subunit.</text>
</comment>
<comment type="similarity">
    <text evidence="1">Belongs to the universal ribosomal protein uL30 family.</text>
</comment>
<gene>
    <name evidence="1" type="primary">rpmD</name>
    <name type="ordered locus">Mext_2183</name>
</gene>
<evidence type="ECO:0000255" key="1">
    <source>
        <dbReference type="HAMAP-Rule" id="MF_01371"/>
    </source>
</evidence>
<evidence type="ECO:0000305" key="2"/>
<accession>A9W4S2</accession>
<protein>
    <recommendedName>
        <fullName evidence="1">Large ribosomal subunit protein uL30</fullName>
    </recommendedName>
    <alternativeName>
        <fullName evidence="2">50S ribosomal protein L30</fullName>
    </alternativeName>
</protein>
<proteinExistence type="inferred from homology"/>
<keyword id="KW-0687">Ribonucleoprotein</keyword>
<keyword id="KW-0689">Ribosomal protein</keyword>